<evidence type="ECO:0000255" key="1">
    <source>
        <dbReference type="HAMAP-Rule" id="MF_00530"/>
    </source>
</evidence>
<reference key="1">
    <citation type="submission" date="2006-01" db="EMBL/GenBank/DDBJ databases">
        <title>Complete sequence of Anaeromyxobacter dehalogenans 2CP-C.</title>
        <authorList>
            <person name="Copeland A."/>
            <person name="Lucas S."/>
            <person name="Lapidus A."/>
            <person name="Barry K."/>
            <person name="Detter J.C."/>
            <person name="Glavina T."/>
            <person name="Hammon N."/>
            <person name="Israni S."/>
            <person name="Pitluck S."/>
            <person name="Brettin T."/>
            <person name="Bruce D."/>
            <person name="Han C."/>
            <person name="Tapia R."/>
            <person name="Gilna P."/>
            <person name="Kiss H."/>
            <person name="Schmutz J."/>
            <person name="Larimer F."/>
            <person name="Land M."/>
            <person name="Kyrpides N."/>
            <person name="Anderson I."/>
            <person name="Sanford R.A."/>
            <person name="Ritalahti K.M."/>
            <person name="Thomas H.S."/>
            <person name="Kirby J.R."/>
            <person name="Zhulin I.B."/>
            <person name="Loeffler F.E."/>
            <person name="Richardson P."/>
        </authorList>
    </citation>
    <scope>NUCLEOTIDE SEQUENCE [LARGE SCALE GENOMIC DNA]</scope>
    <source>
        <strain>2CP-C</strain>
    </source>
</reference>
<dbReference type="EMBL" id="CP000251">
    <property type="protein sequence ID" value="ABC84110.1"/>
    <property type="molecule type" value="Genomic_DNA"/>
</dbReference>
<dbReference type="RefSeq" id="WP_011423392.1">
    <property type="nucleotide sequence ID" value="NC_007760.1"/>
</dbReference>
<dbReference type="SMR" id="Q2IHQ3"/>
<dbReference type="STRING" id="290397.Adeh_4347"/>
<dbReference type="KEGG" id="ade:Adeh_4347"/>
<dbReference type="eggNOG" id="COG0355">
    <property type="taxonomic scope" value="Bacteria"/>
</dbReference>
<dbReference type="HOGENOM" id="CLU_084338_2_1_7"/>
<dbReference type="OrthoDB" id="9799969at2"/>
<dbReference type="Proteomes" id="UP000001935">
    <property type="component" value="Chromosome"/>
</dbReference>
<dbReference type="GO" id="GO:0005886">
    <property type="term" value="C:plasma membrane"/>
    <property type="evidence" value="ECO:0007669"/>
    <property type="project" value="UniProtKB-SubCell"/>
</dbReference>
<dbReference type="GO" id="GO:0045259">
    <property type="term" value="C:proton-transporting ATP synthase complex"/>
    <property type="evidence" value="ECO:0007669"/>
    <property type="project" value="UniProtKB-KW"/>
</dbReference>
<dbReference type="GO" id="GO:0005524">
    <property type="term" value="F:ATP binding"/>
    <property type="evidence" value="ECO:0007669"/>
    <property type="project" value="UniProtKB-UniRule"/>
</dbReference>
<dbReference type="GO" id="GO:0046933">
    <property type="term" value="F:proton-transporting ATP synthase activity, rotational mechanism"/>
    <property type="evidence" value="ECO:0007669"/>
    <property type="project" value="UniProtKB-UniRule"/>
</dbReference>
<dbReference type="CDD" id="cd12152">
    <property type="entry name" value="F1-ATPase_delta"/>
    <property type="match status" value="1"/>
</dbReference>
<dbReference type="Gene3D" id="2.60.15.10">
    <property type="entry name" value="F0F1 ATP synthase delta/epsilon subunit, N-terminal"/>
    <property type="match status" value="1"/>
</dbReference>
<dbReference type="HAMAP" id="MF_00530">
    <property type="entry name" value="ATP_synth_epsil_bac"/>
    <property type="match status" value="1"/>
</dbReference>
<dbReference type="InterPro" id="IPR001469">
    <property type="entry name" value="ATP_synth_F1_dsu/esu"/>
</dbReference>
<dbReference type="InterPro" id="IPR020546">
    <property type="entry name" value="ATP_synth_F1_dsu/esu_N"/>
</dbReference>
<dbReference type="InterPro" id="IPR020547">
    <property type="entry name" value="ATP_synth_F1_esu_C"/>
</dbReference>
<dbReference type="InterPro" id="IPR036771">
    <property type="entry name" value="ATPsynth_dsu/esu_N"/>
</dbReference>
<dbReference type="NCBIfam" id="TIGR01216">
    <property type="entry name" value="ATP_synt_epsi"/>
    <property type="match status" value="1"/>
</dbReference>
<dbReference type="NCBIfam" id="NF009980">
    <property type="entry name" value="PRK13446.1"/>
    <property type="match status" value="1"/>
</dbReference>
<dbReference type="PANTHER" id="PTHR13822">
    <property type="entry name" value="ATP SYNTHASE DELTA/EPSILON CHAIN"/>
    <property type="match status" value="1"/>
</dbReference>
<dbReference type="PANTHER" id="PTHR13822:SF10">
    <property type="entry name" value="ATP SYNTHASE EPSILON CHAIN, CHLOROPLASTIC"/>
    <property type="match status" value="1"/>
</dbReference>
<dbReference type="Pfam" id="PF00401">
    <property type="entry name" value="ATP-synt_DE"/>
    <property type="match status" value="1"/>
</dbReference>
<dbReference type="Pfam" id="PF02823">
    <property type="entry name" value="ATP-synt_DE_N"/>
    <property type="match status" value="1"/>
</dbReference>
<dbReference type="SUPFAM" id="SSF51344">
    <property type="entry name" value="Epsilon subunit of F1F0-ATP synthase N-terminal domain"/>
    <property type="match status" value="1"/>
</dbReference>
<comment type="function">
    <text evidence="1">Produces ATP from ADP in the presence of a proton gradient across the membrane.</text>
</comment>
<comment type="subunit">
    <text>F-type ATPases have 2 components, CF(1) - the catalytic core - and CF(0) - the membrane proton channel. CF(1) has five subunits: alpha(3), beta(3), gamma(1), delta(1), epsilon(1). CF(0) has three main subunits: a, b and c.</text>
</comment>
<comment type="subcellular location">
    <subcellularLocation>
        <location evidence="1">Cell inner membrane</location>
        <topology evidence="1">Peripheral membrane protein</topology>
    </subcellularLocation>
</comment>
<comment type="similarity">
    <text evidence="1">Belongs to the ATPase epsilon chain family.</text>
</comment>
<organism>
    <name type="scientific">Anaeromyxobacter dehalogenans (strain 2CP-C)</name>
    <dbReference type="NCBI Taxonomy" id="290397"/>
    <lineage>
        <taxon>Bacteria</taxon>
        <taxon>Pseudomonadati</taxon>
        <taxon>Myxococcota</taxon>
        <taxon>Myxococcia</taxon>
        <taxon>Myxococcales</taxon>
        <taxon>Cystobacterineae</taxon>
        <taxon>Anaeromyxobacteraceae</taxon>
        <taxon>Anaeromyxobacter</taxon>
    </lineage>
</organism>
<name>ATPE_ANADE</name>
<feature type="chain" id="PRO_0000265783" description="ATP synthase epsilon chain">
    <location>
        <begin position="1"/>
        <end position="132"/>
    </location>
</feature>
<sequence>MALTLDIVTPEKRVLSVQVDEVRAPGVQGGFGVRLNHEPFMTALEPGRLTYVEGGREHHYAVGGGFLQVADNRVIVLADTAEAAGEIDVDRARKAFEDAQNRLLQLTEQDEGHSAESARVRRAAARLTVAGR</sequence>
<gene>
    <name evidence="1" type="primary">atpC</name>
    <name type="ordered locus">Adeh_4347</name>
</gene>
<keyword id="KW-0066">ATP synthesis</keyword>
<keyword id="KW-0997">Cell inner membrane</keyword>
<keyword id="KW-1003">Cell membrane</keyword>
<keyword id="KW-0139">CF(1)</keyword>
<keyword id="KW-0375">Hydrogen ion transport</keyword>
<keyword id="KW-0406">Ion transport</keyword>
<keyword id="KW-0472">Membrane</keyword>
<keyword id="KW-1185">Reference proteome</keyword>
<keyword id="KW-0813">Transport</keyword>
<accession>Q2IHQ3</accession>
<protein>
    <recommendedName>
        <fullName evidence="1">ATP synthase epsilon chain</fullName>
    </recommendedName>
    <alternativeName>
        <fullName evidence="1">ATP synthase F1 sector epsilon subunit</fullName>
    </alternativeName>
    <alternativeName>
        <fullName evidence="1">F-ATPase epsilon subunit</fullName>
    </alternativeName>
</protein>
<proteinExistence type="inferred from homology"/>